<keyword id="KW-0963">Cytoplasm</keyword>
<keyword id="KW-0456">Lyase</keyword>
<keyword id="KW-0704">Schiff base</keyword>
<accession>Q6GET8</accession>
<gene>
    <name evidence="1" type="primary">deoC2</name>
    <name type="ordered locus">SAR2225</name>
</gene>
<proteinExistence type="inferred from homology"/>
<comment type="function">
    <text evidence="1">Catalyzes a reversible aldol reaction between acetaldehyde and D-glyceraldehyde 3-phosphate to generate 2-deoxy-D-ribose 5-phosphate.</text>
</comment>
<comment type="catalytic activity">
    <reaction evidence="1">
        <text>2-deoxy-D-ribose 5-phosphate = D-glyceraldehyde 3-phosphate + acetaldehyde</text>
        <dbReference type="Rhea" id="RHEA:12821"/>
        <dbReference type="ChEBI" id="CHEBI:15343"/>
        <dbReference type="ChEBI" id="CHEBI:59776"/>
        <dbReference type="ChEBI" id="CHEBI:62877"/>
        <dbReference type="EC" id="4.1.2.4"/>
    </reaction>
</comment>
<comment type="pathway">
    <text evidence="1">Carbohydrate degradation; 2-deoxy-D-ribose 1-phosphate degradation; D-glyceraldehyde 3-phosphate and acetaldehyde from 2-deoxy-alpha-D-ribose 1-phosphate: step 2/2.</text>
</comment>
<comment type="subcellular location">
    <subcellularLocation>
        <location evidence="1">Cytoplasm</location>
    </subcellularLocation>
</comment>
<comment type="similarity">
    <text evidence="1 2">Belongs to the DeoC/FbaB aldolase family. DeoC type 1 subfamily.</text>
</comment>
<organism>
    <name type="scientific">Staphylococcus aureus (strain MRSA252)</name>
    <dbReference type="NCBI Taxonomy" id="282458"/>
    <lineage>
        <taxon>Bacteria</taxon>
        <taxon>Bacillati</taxon>
        <taxon>Bacillota</taxon>
        <taxon>Bacilli</taxon>
        <taxon>Bacillales</taxon>
        <taxon>Staphylococcaceae</taxon>
        <taxon>Staphylococcus</taxon>
    </lineage>
</organism>
<dbReference type="EC" id="4.1.2.4" evidence="1"/>
<dbReference type="EMBL" id="BX571856">
    <property type="protein sequence ID" value="CAG41206.1"/>
    <property type="molecule type" value="Genomic_DNA"/>
</dbReference>
<dbReference type="SMR" id="Q6GET8"/>
<dbReference type="KEGG" id="sar:SAR2225"/>
<dbReference type="HOGENOM" id="CLU_053595_0_0_9"/>
<dbReference type="UniPathway" id="UPA00002">
    <property type="reaction ID" value="UER00468"/>
</dbReference>
<dbReference type="Proteomes" id="UP000000596">
    <property type="component" value="Chromosome"/>
</dbReference>
<dbReference type="GO" id="GO:0005737">
    <property type="term" value="C:cytoplasm"/>
    <property type="evidence" value="ECO:0007669"/>
    <property type="project" value="UniProtKB-SubCell"/>
</dbReference>
<dbReference type="GO" id="GO:0004139">
    <property type="term" value="F:deoxyribose-phosphate aldolase activity"/>
    <property type="evidence" value="ECO:0007669"/>
    <property type="project" value="UniProtKB-UniRule"/>
</dbReference>
<dbReference type="GO" id="GO:0006018">
    <property type="term" value="P:2-deoxyribose 1-phosphate catabolic process"/>
    <property type="evidence" value="ECO:0007669"/>
    <property type="project" value="UniProtKB-UniRule"/>
</dbReference>
<dbReference type="GO" id="GO:0016052">
    <property type="term" value="P:carbohydrate catabolic process"/>
    <property type="evidence" value="ECO:0007669"/>
    <property type="project" value="TreeGrafter"/>
</dbReference>
<dbReference type="GO" id="GO:0009264">
    <property type="term" value="P:deoxyribonucleotide catabolic process"/>
    <property type="evidence" value="ECO:0007669"/>
    <property type="project" value="InterPro"/>
</dbReference>
<dbReference type="CDD" id="cd00959">
    <property type="entry name" value="DeoC"/>
    <property type="match status" value="1"/>
</dbReference>
<dbReference type="FunFam" id="3.20.20.70:FF:000044">
    <property type="entry name" value="Deoxyribose-phosphate aldolase"/>
    <property type="match status" value="1"/>
</dbReference>
<dbReference type="Gene3D" id="3.20.20.70">
    <property type="entry name" value="Aldolase class I"/>
    <property type="match status" value="1"/>
</dbReference>
<dbReference type="HAMAP" id="MF_00114">
    <property type="entry name" value="DeoC_type1"/>
    <property type="match status" value="1"/>
</dbReference>
<dbReference type="InterPro" id="IPR013785">
    <property type="entry name" value="Aldolase_TIM"/>
</dbReference>
<dbReference type="InterPro" id="IPR011343">
    <property type="entry name" value="DeoC"/>
</dbReference>
<dbReference type="InterPro" id="IPR002915">
    <property type="entry name" value="DeoC/FbaB/LacD_aldolase"/>
</dbReference>
<dbReference type="InterPro" id="IPR028581">
    <property type="entry name" value="DeoC_typeI"/>
</dbReference>
<dbReference type="NCBIfam" id="TIGR00126">
    <property type="entry name" value="deoC"/>
    <property type="match status" value="1"/>
</dbReference>
<dbReference type="PANTHER" id="PTHR10889">
    <property type="entry name" value="DEOXYRIBOSE-PHOSPHATE ALDOLASE"/>
    <property type="match status" value="1"/>
</dbReference>
<dbReference type="PANTHER" id="PTHR10889:SF1">
    <property type="entry name" value="DEOXYRIBOSE-PHOSPHATE ALDOLASE"/>
    <property type="match status" value="1"/>
</dbReference>
<dbReference type="Pfam" id="PF01791">
    <property type="entry name" value="DeoC"/>
    <property type="match status" value="1"/>
</dbReference>
<dbReference type="PIRSF" id="PIRSF001357">
    <property type="entry name" value="DeoC"/>
    <property type="match status" value="1"/>
</dbReference>
<dbReference type="SMART" id="SM01133">
    <property type="entry name" value="DeoC"/>
    <property type="match status" value="1"/>
</dbReference>
<dbReference type="SUPFAM" id="SSF51569">
    <property type="entry name" value="Aldolase"/>
    <property type="match status" value="1"/>
</dbReference>
<feature type="chain" id="PRO_0000057262" description="Deoxyribose-phosphate aldolase 2">
    <location>
        <begin position="1"/>
        <end position="220"/>
    </location>
</feature>
<feature type="active site" description="Proton donor/acceptor" evidence="1">
    <location>
        <position position="89"/>
    </location>
</feature>
<feature type="active site" description="Schiff-base intermediate with acetaldehyde" evidence="1">
    <location>
        <position position="151"/>
    </location>
</feature>
<feature type="active site" description="Proton donor/acceptor" evidence="1">
    <location>
        <position position="180"/>
    </location>
</feature>
<name>DEOC2_STAAR</name>
<sequence>MNSAKLIDHTLLKPESTRTQIDQIIDEAKAYNFKSVCVNPTHVKYAAERLADSGVLVCTVIGFPLGASTTATKAFETEDAIQNGADEIDMVINIGALKDGRFDDVQQDIEAVVKAAKGHTVKVIIETVLLDHDEIVKASELTKAAGADFVKTSTGFAGGGATAEDVKLMKDTVGADVEVKASGGVRNLEDFNKMVEAGATRIGASAGVQIMQGLEADSDY</sequence>
<protein>
    <recommendedName>
        <fullName evidence="1">Deoxyribose-phosphate aldolase 2</fullName>
        <shortName evidence="1">DERA 2</shortName>
        <ecNumber evidence="1">4.1.2.4</ecNumber>
    </recommendedName>
    <alternativeName>
        <fullName evidence="1">2-deoxy-D-ribose 5-phosphate aldolase 2</fullName>
    </alternativeName>
    <alternativeName>
        <fullName evidence="1">Phosphodeoxyriboaldolase 2</fullName>
        <shortName evidence="1">Deoxyriboaldolase 2</shortName>
    </alternativeName>
</protein>
<evidence type="ECO:0000255" key="1">
    <source>
        <dbReference type="HAMAP-Rule" id="MF_00114"/>
    </source>
</evidence>
<evidence type="ECO:0000305" key="2"/>
<reference key="1">
    <citation type="journal article" date="2004" name="Proc. Natl. Acad. Sci. U.S.A.">
        <title>Complete genomes of two clinical Staphylococcus aureus strains: evidence for the rapid evolution of virulence and drug resistance.</title>
        <authorList>
            <person name="Holden M.T.G."/>
            <person name="Feil E.J."/>
            <person name="Lindsay J.A."/>
            <person name="Peacock S.J."/>
            <person name="Day N.P.J."/>
            <person name="Enright M.C."/>
            <person name="Foster T.J."/>
            <person name="Moore C.E."/>
            <person name="Hurst L."/>
            <person name="Atkin R."/>
            <person name="Barron A."/>
            <person name="Bason N."/>
            <person name="Bentley S.D."/>
            <person name="Chillingworth C."/>
            <person name="Chillingworth T."/>
            <person name="Churcher C."/>
            <person name="Clark L."/>
            <person name="Corton C."/>
            <person name="Cronin A."/>
            <person name="Doggett J."/>
            <person name="Dowd L."/>
            <person name="Feltwell T."/>
            <person name="Hance Z."/>
            <person name="Harris B."/>
            <person name="Hauser H."/>
            <person name="Holroyd S."/>
            <person name="Jagels K."/>
            <person name="James K.D."/>
            <person name="Lennard N."/>
            <person name="Line A."/>
            <person name="Mayes R."/>
            <person name="Moule S."/>
            <person name="Mungall K."/>
            <person name="Ormond D."/>
            <person name="Quail M.A."/>
            <person name="Rabbinowitsch E."/>
            <person name="Rutherford K.M."/>
            <person name="Sanders M."/>
            <person name="Sharp S."/>
            <person name="Simmonds M."/>
            <person name="Stevens K."/>
            <person name="Whitehead S."/>
            <person name="Barrell B.G."/>
            <person name="Spratt B.G."/>
            <person name="Parkhill J."/>
        </authorList>
    </citation>
    <scope>NUCLEOTIDE SEQUENCE [LARGE SCALE GENOMIC DNA]</scope>
    <source>
        <strain>MRSA252</strain>
    </source>
</reference>